<feature type="chain" id="PRO_1000136337" description="Protein FixB">
    <location>
        <begin position="1"/>
        <end position="313"/>
    </location>
</feature>
<feature type="binding site" evidence="1">
    <location>
        <begin position="255"/>
        <end position="283"/>
    </location>
    <ligand>
        <name>FAD</name>
        <dbReference type="ChEBI" id="CHEBI:57692"/>
    </ligand>
</feature>
<organism>
    <name type="scientific">Salmonella paratyphi A (strain AKU_12601)</name>
    <dbReference type="NCBI Taxonomy" id="554290"/>
    <lineage>
        <taxon>Bacteria</taxon>
        <taxon>Pseudomonadati</taxon>
        <taxon>Pseudomonadota</taxon>
        <taxon>Gammaproteobacteria</taxon>
        <taxon>Enterobacterales</taxon>
        <taxon>Enterobacteriaceae</taxon>
        <taxon>Salmonella</taxon>
    </lineage>
</organism>
<evidence type="ECO:0000255" key="1">
    <source>
        <dbReference type="HAMAP-Rule" id="MF_01056"/>
    </source>
</evidence>
<dbReference type="EMBL" id="FM200053">
    <property type="protein sequence ID" value="CAR58184.1"/>
    <property type="molecule type" value="Genomic_DNA"/>
</dbReference>
<dbReference type="RefSeq" id="WP_001032189.1">
    <property type="nucleotide sequence ID" value="NC_011147.1"/>
</dbReference>
<dbReference type="SMR" id="B5BL14"/>
<dbReference type="KEGG" id="sek:SSPA0073"/>
<dbReference type="HOGENOM" id="CLU_034178_0_1_6"/>
<dbReference type="UniPathway" id="UPA00117"/>
<dbReference type="Proteomes" id="UP000001869">
    <property type="component" value="Chromosome"/>
</dbReference>
<dbReference type="GO" id="GO:0009055">
    <property type="term" value="F:electron transfer activity"/>
    <property type="evidence" value="ECO:0007669"/>
    <property type="project" value="InterPro"/>
</dbReference>
<dbReference type="GO" id="GO:0050660">
    <property type="term" value="F:flavin adenine dinucleotide binding"/>
    <property type="evidence" value="ECO:0007669"/>
    <property type="project" value="InterPro"/>
</dbReference>
<dbReference type="GO" id="GO:0009437">
    <property type="term" value="P:carnitine metabolic process"/>
    <property type="evidence" value="ECO:0007669"/>
    <property type="project" value="UniProtKB-UniRule"/>
</dbReference>
<dbReference type="GO" id="GO:0033539">
    <property type="term" value="P:fatty acid beta-oxidation using acyl-CoA dehydrogenase"/>
    <property type="evidence" value="ECO:0007669"/>
    <property type="project" value="TreeGrafter"/>
</dbReference>
<dbReference type="FunFam" id="3.40.50.1220:FF:000004">
    <property type="entry name" value="Electron transfer flavoprotein"/>
    <property type="match status" value="1"/>
</dbReference>
<dbReference type="FunFam" id="3.40.50.620:FF:000067">
    <property type="entry name" value="Protein FixB"/>
    <property type="match status" value="1"/>
</dbReference>
<dbReference type="Gene3D" id="3.40.50.620">
    <property type="entry name" value="HUPs"/>
    <property type="match status" value="1"/>
</dbReference>
<dbReference type="Gene3D" id="3.40.50.1220">
    <property type="entry name" value="TPP-binding domain"/>
    <property type="match status" value="1"/>
</dbReference>
<dbReference type="HAMAP" id="MF_01056">
    <property type="entry name" value="FixB"/>
    <property type="match status" value="1"/>
</dbReference>
<dbReference type="InterPro" id="IPR029035">
    <property type="entry name" value="DHS-like_NAD/FAD-binding_dom"/>
</dbReference>
<dbReference type="InterPro" id="IPR014730">
    <property type="entry name" value="ETF_a/b_N"/>
</dbReference>
<dbReference type="InterPro" id="IPR001308">
    <property type="entry name" value="ETF_a/FixB"/>
</dbReference>
<dbReference type="InterPro" id="IPR014731">
    <property type="entry name" value="ETF_asu_C"/>
</dbReference>
<dbReference type="InterPro" id="IPR018206">
    <property type="entry name" value="ETF_asu_C_CS"/>
</dbReference>
<dbReference type="InterPro" id="IPR023461">
    <property type="entry name" value="FixB"/>
</dbReference>
<dbReference type="InterPro" id="IPR014729">
    <property type="entry name" value="Rossmann-like_a/b/a_fold"/>
</dbReference>
<dbReference type="NCBIfam" id="NF002889">
    <property type="entry name" value="PRK03363.1"/>
    <property type="match status" value="1"/>
</dbReference>
<dbReference type="PANTHER" id="PTHR43153">
    <property type="entry name" value="ELECTRON TRANSFER FLAVOPROTEIN ALPHA"/>
    <property type="match status" value="1"/>
</dbReference>
<dbReference type="PANTHER" id="PTHR43153:SF5">
    <property type="entry name" value="PROTEIN FIXB-RELATED"/>
    <property type="match status" value="1"/>
</dbReference>
<dbReference type="Pfam" id="PF01012">
    <property type="entry name" value="ETF"/>
    <property type="match status" value="1"/>
</dbReference>
<dbReference type="Pfam" id="PF00766">
    <property type="entry name" value="ETF_alpha"/>
    <property type="match status" value="1"/>
</dbReference>
<dbReference type="PIRSF" id="PIRSF000089">
    <property type="entry name" value="Electra_flavoP_a"/>
    <property type="match status" value="1"/>
</dbReference>
<dbReference type="SMART" id="SM00893">
    <property type="entry name" value="ETF"/>
    <property type="match status" value="1"/>
</dbReference>
<dbReference type="SUPFAM" id="SSF52402">
    <property type="entry name" value="Adenine nucleotide alpha hydrolases-like"/>
    <property type="match status" value="1"/>
</dbReference>
<dbReference type="SUPFAM" id="SSF52467">
    <property type="entry name" value="DHS-like NAD/FAD-binding domain"/>
    <property type="match status" value="1"/>
</dbReference>
<dbReference type="PROSITE" id="PS00696">
    <property type="entry name" value="ETF_ALPHA"/>
    <property type="match status" value="1"/>
</dbReference>
<comment type="function">
    <text evidence="1">Required for anaerobic carnitine reduction. May bring reductant to CaiA.</text>
</comment>
<comment type="pathway">
    <text evidence="1">Amine and polyamine metabolism; carnitine metabolism.</text>
</comment>
<comment type="subunit">
    <text evidence="1">Heterodimer of FixA and FixB.</text>
</comment>
<comment type="similarity">
    <text evidence="1">Belongs to the ETF alpha-subunit/FixB family.</text>
</comment>
<reference key="1">
    <citation type="journal article" date="2009" name="BMC Genomics">
        <title>Pseudogene accumulation in the evolutionary histories of Salmonella enterica serovars Paratyphi A and Typhi.</title>
        <authorList>
            <person name="Holt K.E."/>
            <person name="Thomson N.R."/>
            <person name="Wain J."/>
            <person name="Langridge G.C."/>
            <person name="Hasan R."/>
            <person name="Bhutta Z.A."/>
            <person name="Quail M.A."/>
            <person name="Norbertczak H."/>
            <person name="Walker D."/>
            <person name="Simmonds M."/>
            <person name="White B."/>
            <person name="Bason N."/>
            <person name="Mungall K."/>
            <person name="Dougan G."/>
            <person name="Parkhill J."/>
        </authorList>
    </citation>
    <scope>NUCLEOTIDE SEQUENCE [LARGE SCALE GENOMIC DNA]</scope>
    <source>
        <strain>AKU_12601</strain>
    </source>
</reference>
<protein>
    <recommendedName>
        <fullName evidence="1">Protein FixB</fullName>
    </recommendedName>
</protein>
<name>FIXB_SALPK</name>
<proteinExistence type="inferred from homology"/>
<gene>
    <name evidence="1" type="primary">fixB</name>
    <name type="ordered locus">SSPA0073</name>
</gene>
<sequence length="313" mass="33223">MNKFSSVWVFSDTPSRLPELMSGAQAVGEKVNAFVLNEADSATACHLGADHVWLLSGKPEDRMIEDYAAAMAETIRQHSEGGAVLLPNTRRGKLLAAKLGYRLSAAVSNDASDVSLQDGKAAVKHMVYGGLAIGAETIASPFAVITLSSGTFDAQQPDASRSGEMHTVQWQAPATAVTRTATQARQSNSVDLDKARLVVSVGRGIGSKENISLAEALCQTIGAELACSRPVAENEKWMEHERYVGISNLMLKPELYLAVGISGQIQHMVGANGAQTIFAINKDKNAPIFQYADFGIVGDALKILPALTAALAR</sequence>
<keyword id="KW-0249">Electron transport</keyword>
<keyword id="KW-0274">FAD</keyword>
<keyword id="KW-0285">Flavoprotein</keyword>
<keyword id="KW-0813">Transport</keyword>
<accession>B5BL14</accession>